<reference key="1">
    <citation type="journal article" date="2011" name="J. Bacteriol.">
        <title>Complete genome sequence of the plant growth-promoting endophyte Burkholderia phytofirmans strain PsJN.</title>
        <authorList>
            <person name="Weilharter A."/>
            <person name="Mitter B."/>
            <person name="Shin M.V."/>
            <person name="Chain P.S."/>
            <person name="Nowak J."/>
            <person name="Sessitsch A."/>
        </authorList>
    </citation>
    <scope>NUCLEOTIDE SEQUENCE [LARGE SCALE GENOMIC DNA]</scope>
    <source>
        <strain>DSM 17436 / LMG 22146 / PsJN</strain>
    </source>
</reference>
<feature type="chain" id="PRO_1000088745" description="Aspartate carbamoyltransferase catalytic subunit">
    <location>
        <begin position="1"/>
        <end position="341"/>
    </location>
</feature>
<feature type="binding site" evidence="1">
    <location>
        <position position="89"/>
    </location>
    <ligand>
        <name>carbamoyl phosphate</name>
        <dbReference type="ChEBI" id="CHEBI:58228"/>
    </ligand>
</feature>
<feature type="binding site" evidence="1">
    <location>
        <position position="90"/>
    </location>
    <ligand>
        <name>carbamoyl phosphate</name>
        <dbReference type="ChEBI" id="CHEBI:58228"/>
    </ligand>
</feature>
<feature type="binding site" evidence="1">
    <location>
        <position position="117"/>
    </location>
    <ligand>
        <name>L-aspartate</name>
        <dbReference type="ChEBI" id="CHEBI:29991"/>
    </ligand>
</feature>
<feature type="binding site" evidence="1">
    <location>
        <position position="139"/>
    </location>
    <ligand>
        <name>carbamoyl phosphate</name>
        <dbReference type="ChEBI" id="CHEBI:58228"/>
    </ligand>
</feature>
<feature type="binding site" evidence="1">
    <location>
        <position position="169"/>
    </location>
    <ligand>
        <name>carbamoyl phosphate</name>
        <dbReference type="ChEBI" id="CHEBI:58228"/>
    </ligand>
</feature>
<feature type="binding site" evidence="1">
    <location>
        <position position="172"/>
    </location>
    <ligand>
        <name>carbamoyl phosphate</name>
        <dbReference type="ChEBI" id="CHEBI:58228"/>
    </ligand>
</feature>
<feature type="binding site" evidence="1">
    <location>
        <position position="202"/>
    </location>
    <ligand>
        <name>L-aspartate</name>
        <dbReference type="ChEBI" id="CHEBI:29991"/>
    </ligand>
</feature>
<feature type="binding site" evidence="1">
    <location>
        <position position="257"/>
    </location>
    <ligand>
        <name>L-aspartate</name>
        <dbReference type="ChEBI" id="CHEBI:29991"/>
    </ligand>
</feature>
<feature type="binding site" evidence="1">
    <location>
        <position position="298"/>
    </location>
    <ligand>
        <name>carbamoyl phosphate</name>
        <dbReference type="ChEBI" id="CHEBI:58228"/>
    </ligand>
</feature>
<feature type="binding site" evidence="1">
    <location>
        <position position="299"/>
    </location>
    <ligand>
        <name>carbamoyl phosphate</name>
        <dbReference type="ChEBI" id="CHEBI:58228"/>
    </ligand>
</feature>
<sequence length="341" mass="37242">MNTATQAPKDSADSATERFRYGFLKGNPQLTKNGELKHLLSIEGLPKAIVNHILDTADQFVSVTDREVKKVPLLRGKSVFNLFFENSTRTRTTFEIAATRLSADVLNLNINASSTSKGESLLDTINNLSAMHADMFVVRHASSGAPYLIAQHCAPHVHVINAGDGRHAHPTQGLLDMYTIRHYKKDFTKLRVAIVGDILHSRVARSDIHALTTLGVPEVRAIGPRTLLPGGLEQMGVRVFHNLDEGLKDVDVIIMLRLQNERMSGALLPSAQEYFKSWGLTPERLALAAPDAIVMHPGPMNRGVEIDSQVADGPQSVILNQVTFGIAVRMAVMGIVAGNHD</sequence>
<organism>
    <name type="scientific">Paraburkholderia phytofirmans (strain DSM 17436 / LMG 22146 / PsJN)</name>
    <name type="common">Burkholderia phytofirmans</name>
    <dbReference type="NCBI Taxonomy" id="398527"/>
    <lineage>
        <taxon>Bacteria</taxon>
        <taxon>Pseudomonadati</taxon>
        <taxon>Pseudomonadota</taxon>
        <taxon>Betaproteobacteria</taxon>
        <taxon>Burkholderiales</taxon>
        <taxon>Burkholderiaceae</taxon>
        <taxon>Paraburkholderia</taxon>
    </lineage>
</organism>
<protein>
    <recommendedName>
        <fullName evidence="1">Aspartate carbamoyltransferase catalytic subunit</fullName>
        <ecNumber evidence="1">2.1.3.2</ecNumber>
    </recommendedName>
    <alternativeName>
        <fullName evidence="1">Aspartate transcarbamylase</fullName>
        <shortName evidence="1">ATCase</shortName>
    </alternativeName>
</protein>
<evidence type="ECO:0000255" key="1">
    <source>
        <dbReference type="HAMAP-Rule" id="MF_00001"/>
    </source>
</evidence>
<proteinExistence type="inferred from homology"/>
<dbReference type="EC" id="2.1.3.2" evidence="1"/>
<dbReference type="EMBL" id="CP001052">
    <property type="protein sequence ID" value="ACD15292.1"/>
    <property type="molecule type" value="Genomic_DNA"/>
</dbReference>
<dbReference type="RefSeq" id="WP_012431924.1">
    <property type="nucleotide sequence ID" value="NC_010681.1"/>
</dbReference>
<dbReference type="SMR" id="B2T0I7"/>
<dbReference type="STRING" id="398527.Bphyt_0871"/>
<dbReference type="KEGG" id="bpy:Bphyt_0871"/>
<dbReference type="eggNOG" id="COG0540">
    <property type="taxonomic scope" value="Bacteria"/>
</dbReference>
<dbReference type="HOGENOM" id="CLU_043846_2_0_4"/>
<dbReference type="OrthoDB" id="9774690at2"/>
<dbReference type="UniPathway" id="UPA00070">
    <property type="reaction ID" value="UER00116"/>
</dbReference>
<dbReference type="Proteomes" id="UP000001739">
    <property type="component" value="Chromosome 1"/>
</dbReference>
<dbReference type="GO" id="GO:0005829">
    <property type="term" value="C:cytosol"/>
    <property type="evidence" value="ECO:0007669"/>
    <property type="project" value="TreeGrafter"/>
</dbReference>
<dbReference type="GO" id="GO:0016597">
    <property type="term" value="F:amino acid binding"/>
    <property type="evidence" value="ECO:0007669"/>
    <property type="project" value="InterPro"/>
</dbReference>
<dbReference type="GO" id="GO:0004070">
    <property type="term" value="F:aspartate carbamoyltransferase activity"/>
    <property type="evidence" value="ECO:0007669"/>
    <property type="project" value="UniProtKB-UniRule"/>
</dbReference>
<dbReference type="GO" id="GO:0006207">
    <property type="term" value="P:'de novo' pyrimidine nucleobase biosynthetic process"/>
    <property type="evidence" value="ECO:0007669"/>
    <property type="project" value="InterPro"/>
</dbReference>
<dbReference type="GO" id="GO:0044205">
    <property type="term" value="P:'de novo' UMP biosynthetic process"/>
    <property type="evidence" value="ECO:0007669"/>
    <property type="project" value="UniProtKB-UniRule"/>
</dbReference>
<dbReference type="GO" id="GO:0006520">
    <property type="term" value="P:amino acid metabolic process"/>
    <property type="evidence" value="ECO:0007669"/>
    <property type="project" value="InterPro"/>
</dbReference>
<dbReference type="FunFam" id="3.40.50.1370:FF:000007">
    <property type="entry name" value="Aspartate carbamoyltransferase"/>
    <property type="match status" value="1"/>
</dbReference>
<dbReference type="Gene3D" id="3.40.50.1370">
    <property type="entry name" value="Aspartate/ornithine carbamoyltransferase"/>
    <property type="match status" value="2"/>
</dbReference>
<dbReference type="HAMAP" id="MF_00001">
    <property type="entry name" value="Asp_carb_tr"/>
    <property type="match status" value="1"/>
</dbReference>
<dbReference type="InterPro" id="IPR006132">
    <property type="entry name" value="Asp/Orn_carbamoyltranf_P-bd"/>
</dbReference>
<dbReference type="InterPro" id="IPR006130">
    <property type="entry name" value="Asp/Orn_carbamoylTrfase"/>
</dbReference>
<dbReference type="InterPro" id="IPR036901">
    <property type="entry name" value="Asp/Orn_carbamoylTrfase_sf"/>
</dbReference>
<dbReference type="InterPro" id="IPR002082">
    <property type="entry name" value="Asp_carbamoyltransf"/>
</dbReference>
<dbReference type="InterPro" id="IPR006131">
    <property type="entry name" value="Asp_carbamoyltransf_Asp/Orn-bd"/>
</dbReference>
<dbReference type="NCBIfam" id="TIGR00670">
    <property type="entry name" value="asp_carb_tr"/>
    <property type="match status" value="1"/>
</dbReference>
<dbReference type="NCBIfam" id="NF002032">
    <property type="entry name" value="PRK00856.1"/>
    <property type="match status" value="1"/>
</dbReference>
<dbReference type="PANTHER" id="PTHR45753:SF6">
    <property type="entry name" value="ASPARTATE CARBAMOYLTRANSFERASE"/>
    <property type="match status" value="1"/>
</dbReference>
<dbReference type="PANTHER" id="PTHR45753">
    <property type="entry name" value="ORNITHINE CARBAMOYLTRANSFERASE, MITOCHONDRIAL"/>
    <property type="match status" value="1"/>
</dbReference>
<dbReference type="Pfam" id="PF00185">
    <property type="entry name" value="OTCace"/>
    <property type="match status" value="1"/>
</dbReference>
<dbReference type="Pfam" id="PF02729">
    <property type="entry name" value="OTCace_N"/>
    <property type="match status" value="1"/>
</dbReference>
<dbReference type="PRINTS" id="PR00100">
    <property type="entry name" value="AOTCASE"/>
</dbReference>
<dbReference type="PRINTS" id="PR00101">
    <property type="entry name" value="ATCASE"/>
</dbReference>
<dbReference type="SUPFAM" id="SSF53671">
    <property type="entry name" value="Aspartate/ornithine carbamoyltransferase"/>
    <property type="match status" value="1"/>
</dbReference>
<dbReference type="PROSITE" id="PS00097">
    <property type="entry name" value="CARBAMOYLTRANSFERASE"/>
    <property type="match status" value="1"/>
</dbReference>
<name>PYRB_PARPJ</name>
<comment type="function">
    <text evidence="1">Catalyzes the condensation of carbamoyl phosphate and aspartate to form carbamoyl aspartate and inorganic phosphate, the committed step in the de novo pyrimidine nucleotide biosynthesis pathway.</text>
</comment>
<comment type="catalytic activity">
    <reaction evidence="1">
        <text>carbamoyl phosphate + L-aspartate = N-carbamoyl-L-aspartate + phosphate + H(+)</text>
        <dbReference type="Rhea" id="RHEA:20013"/>
        <dbReference type="ChEBI" id="CHEBI:15378"/>
        <dbReference type="ChEBI" id="CHEBI:29991"/>
        <dbReference type="ChEBI" id="CHEBI:32814"/>
        <dbReference type="ChEBI" id="CHEBI:43474"/>
        <dbReference type="ChEBI" id="CHEBI:58228"/>
        <dbReference type="EC" id="2.1.3.2"/>
    </reaction>
</comment>
<comment type="pathway">
    <text evidence="1">Pyrimidine metabolism; UMP biosynthesis via de novo pathway; (S)-dihydroorotate from bicarbonate: step 2/3.</text>
</comment>
<comment type="subunit">
    <text evidence="1">Heterododecamer (2C3:3R2) of six catalytic PyrB chains organized as two trimers (C3), and six regulatory PyrI chains organized as three dimers (R2).</text>
</comment>
<comment type="similarity">
    <text evidence="1">Belongs to the aspartate/ornithine carbamoyltransferase superfamily. ATCase family.</text>
</comment>
<keyword id="KW-0665">Pyrimidine biosynthesis</keyword>
<keyword id="KW-0808">Transferase</keyword>
<accession>B2T0I7</accession>
<gene>
    <name evidence="1" type="primary">pyrB</name>
    <name type="ordered locus">Bphyt_0871</name>
</gene>